<feature type="chain" id="PRO_1000188797" description="Acyl carrier protein phosphodiesterase">
    <location>
        <begin position="1"/>
        <end position="193"/>
    </location>
</feature>
<sequence length="193" mass="23021">MNFLAHLHLAHLAESSLSGNLLADFVRGNPEESFPPDVVAGIHMHRRIDVLTDNLPEVREAREWFRNETRRVAPITLDVMWDHFLSRHWSQLSPDFPLQEFTCYAREQVMTILPDSPPRFINLNNYLWSEQWLVRYRDMDFIQSVLNGMASRRPRLDALRDSWYDLDAHYDALETRFWQFYPRMMEQASRKAL</sequence>
<proteinExistence type="inferred from homology"/>
<protein>
    <recommendedName>
        <fullName evidence="1">Acyl carrier protein phosphodiesterase</fullName>
        <shortName evidence="1">ACP phosphodiesterase</shortName>
        <ecNumber evidence="1">3.1.4.14</ecNumber>
    </recommendedName>
</protein>
<evidence type="ECO:0000255" key="1">
    <source>
        <dbReference type="HAMAP-Rule" id="MF_01950"/>
    </source>
</evidence>
<dbReference type="EC" id="3.1.4.14" evidence="1"/>
<dbReference type="EMBL" id="FM180568">
    <property type="protein sequence ID" value="CAS07887.1"/>
    <property type="molecule type" value="Genomic_DNA"/>
</dbReference>
<dbReference type="RefSeq" id="WP_001009870.1">
    <property type="nucleotide sequence ID" value="NC_011601.1"/>
</dbReference>
<dbReference type="SMR" id="B7UJM7"/>
<dbReference type="KEGG" id="ecg:E2348C_0339"/>
<dbReference type="HOGENOM" id="CLU_099370_1_0_6"/>
<dbReference type="Proteomes" id="UP000008205">
    <property type="component" value="Chromosome"/>
</dbReference>
<dbReference type="GO" id="GO:0008770">
    <property type="term" value="F:[acyl-carrier-protein] phosphodiesterase activity"/>
    <property type="evidence" value="ECO:0007669"/>
    <property type="project" value="UniProtKB-UniRule"/>
</dbReference>
<dbReference type="GO" id="GO:0006633">
    <property type="term" value="P:fatty acid biosynthetic process"/>
    <property type="evidence" value="ECO:0007669"/>
    <property type="project" value="UniProtKB-UniRule"/>
</dbReference>
<dbReference type="HAMAP" id="MF_01950">
    <property type="entry name" value="AcpH"/>
    <property type="match status" value="1"/>
</dbReference>
<dbReference type="InterPro" id="IPR007431">
    <property type="entry name" value="ACP_PD"/>
</dbReference>
<dbReference type="InterPro" id="IPR023491">
    <property type="entry name" value="ACP_phosphodiesterase_gpbac"/>
</dbReference>
<dbReference type="NCBIfam" id="NF007466">
    <property type="entry name" value="PRK10045.1"/>
    <property type="match status" value="1"/>
</dbReference>
<dbReference type="PANTHER" id="PTHR38764">
    <property type="entry name" value="ACYL CARRIER PROTEIN PHOSPHODIESTERASE"/>
    <property type="match status" value="1"/>
</dbReference>
<dbReference type="PANTHER" id="PTHR38764:SF1">
    <property type="entry name" value="ACYL CARRIER PROTEIN PHOSPHODIESTERASE"/>
    <property type="match status" value="1"/>
</dbReference>
<dbReference type="Pfam" id="PF04336">
    <property type="entry name" value="ACP_PD"/>
    <property type="match status" value="1"/>
</dbReference>
<dbReference type="PIRSF" id="PIRSF011489">
    <property type="entry name" value="DUF479"/>
    <property type="match status" value="1"/>
</dbReference>
<organism>
    <name type="scientific">Escherichia coli O127:H6 (strain E2348/69 / EPEC)</name>
    <dbReference type="NCBI Taxonomy" id="574521"/>
    <lineage>
        <taxon>Bacteria</taxon>
        <taxon>Pseudomonadati</taxon>
        <taxon>Pseudomonadota</taxon>
        <taxon>Gammaproteobacteria</taxon>
        <taxon>Enterobacterales</taxon>
        <taxon>Enterobacteriaceae</taxon>
        <taxon>Escherichia</taxon>
    </lineage>
</organism>
<name>ACPH_ECO27</name>
<gene>
    <name evidence="1" type="primary">acpH</name>
    <name type="ordered locus">E2348C_0339</name>
</gene>
<comment type="function">
    <text evidence="1">Converts holo-ACP to apo-ACP by hydrolytic cleavage of the phosphopantetheine prosthetic group from ACP.</text>
</comment>
<comment type="catalytic activity">
    <reaction evidence="1">
        <text>holo-[ACP] + H2O = apo-[ACP] + (R)-4'-phosphopantetheine + H(+)</text>
        <dbReference type="Rhea" id="RHEA:20537"/>
        <dbReference type="Rhea" id="RHEA-COMP:9685"/>
        <dbReference type="Rhea" id="RHEA-COMP:9690"/>
        <dbReference type="ChEBI" id="CHEBI:15377"/>
        <dbReference type="ChEBI" id="CHEBI:15378"/>
        <dbReference type="ChEBI" id="CHEBI:29999"/>
        <dbReference type="ChEBI" id="CHEBI:61723"/>
        <dbReference type="ChEBI" id="CHEBI:64479"/>
        <dbReference type="EC" id="3.1.4.14"/>
    </reaction>
</comment>
<comment type="similarity">
    <text evidence="1">Belongs to the AcpH family.</text>
</comment>
<reference key="1">
    <citation type="journal article" date="2009" name="J. Bacteriol.">
        <title>Complete genome sequence and comparative genome analysis of enteropathogenic Escherichia coli O127:H6 strain E2348/69.</title>
        <authorList>
            <person name="Iguchi A."/>
            <person name="Thomson N.R."/>
            <person name="Ogura Y."/>
            <person name="Saunders D."/>
            <person name="Ooka T."/>
            <person name="Henderson I.R."/>
            <person name="Harris D."/>
            <person name="Asadulghani M."/>
            <person name="Kurokawa K."/>
            <person name="Dean P."/>
            <person name="Kenny B."/>
            <person name="Quail M.A."/>
            <person name="Thurston S."/>
            <person name="Dougan G."/>
            <person name="Hayashi T."/>
            <person name="Parkhill J."/>
            <person name="Frankel G."/>
        </authorList>
    </citation>
    <scope>NUCLEOTIDE SEQUENCE [LARGE SCALE GENOMIC DNA]</scope>
    <source>
        <strain>E2348/69 / EPEC</strain>
    </source>
</reference>
<accession>B7UJM7</accession>
<keyword id="KW-0275">Fatty acid biosynthesis</keyword>
<keyword id="KW-0276">Fatty acid metabolism</keyword>
<keyword id="KW-0378">Hydrolase</keyword>
<keyword id="KW-0444">Lipid biosynthesis</keyword>
<keyword id="KW-0443">Lipid metabolism</keyword>
<keyword id="KW-1185">Reference proteome</keyword>